<feature type="chain" id="PRO_0000127989" description="Uncharacterized protein AF_1331">
    <location>
        <begin position="1"/>
        <end position="330"/>
    </location>
</feature>
<keyword id="KW-1185">Reference proteome</keyword>
<sequence length="330" mass="38741">MEFRKEVEVAKILVGGKVEENVVEIRYDPLTLQTSRILKKTIPMQSGDFQEEIDSTRSWCPFCPERIEQMVSRDPEIMEGELWKRGEAVLFSNLTPYSKYSLVLRLTEEHYVPVSEFKSQHFFDAFKLIQEYVKKVPEGKYYVTIGMNYLKPSGSSIMHPHIQVMISEVSTDYFARLDWSALEFKESNGVDYWKKLAEVEKGGERYIGSTDKTEWVAAFAPKGFFHFTGIPEEREFMQMSDEQLKGIAEGIAKILRYYGRKNLNAFNFSMFCADRIGDHFRTNINIVARTPFAKYYWCDVFYPKMFHDESVVFFVPEEYAKEIREIWSEL</sequence>
<accession>O28938</accession>
<proteinExistence type="predicted"/>
<name>Y1331_ARCFU</name>
<reference key="1">
    <citation type="journal article" date="1997" name="Nature">
        <title>The complete genome sequence of the hyperthermophilic, sulphate-reducing archaeon Archaeoglobus fulgidus.</title>
        <authorList>
            <person name="Klenk H.-P."/>
            <person name="Clayton R.A."/>
            <person name="Tomb J.-F."/>
            <person name="White O."/>
            <person name="Nelson K.E."/>
            <person name="Ketchum K.A."/>
            <person name="Dodson R.J."/>
            <person name="Gwinn M.L."/>
            <person name="Hickey E.K."/>
            <person name="Peterson J.D."/>
            <person name="Richardson D.L."/>
            <person name="Kerlavage A.R."/>
            <person name="Graham D.E."/>
            <person name="Kyrpides N.C."/>
            <person name="Fleischmann R.D."/>
            <person name="Quackenbush J."/>
            <person name="Lee N.H."/>
            <person name="Sutton G.G."/>
            <person name="Gill S.R."/>
            <person name="Kirkness E.F."/>
            <person name="Dougherty B.A."/>
            <person name="McKenney K."/>
            <person name="Adams M.D."/>
            <person name="Loftus B.J."/>
            <person name="Peterson S.N."/>
            <person name="Reich C.I."/>
            <person name="McNeil L.K."/>
            <person name="Badger J.H."/>
            <person name="Glodek A."/>
            <person name="Zhou L."/>
            <person name="Overbeek R."/>
            <person name="Gocayne J.D."/>
            <person name="Weidman J.F."/>
            <person name="McDonald L.A."/>
            <person name="Utterback T.R."/>
            <person name="Cotton M.D."/>
            <person name="Spriggs T."/>
            <person name="Artiach P."/>
            <person name="Kaine B.P."/>
            <person name="Sykes S.M."/>
            <person name="Sadow P.W."/>
            <person name="D'Andrea K.P."/>
            <person name="Bowman C."/>
            <person name="Fujii C."/>
            <person name="Garland S.A."/>
            <person name="Mason T.M."/>
            <person name="Olsen G.J."/>
            <person name="Fraser C.M."/>
            <person name="Smith H.O."/>
            <person name="Woese C.R."/>
            <person name="Venter J.C."/>
        </authorList>
    </citation>
    <scope>NUCLEOTIDE SEQUENCE [LARGE SCALE GENOMIC DNA]</scope>
    <source>
        <strain>ATCC 49558 / DSM 4304 / JCM 9628 / NBRC 100126 / VC-16</strain>
    </source>
</reference>
<organism>
    <name type="scientific">Archaeoglobus fulgidus (strain ATCC 49558 / DSM 4304 / JCM 9628 / NBRC 100126 / VC-16)</name>
    <dbReference type="NCBI Taxonomy" id="224325"/>
    <lineage>
        <taxon>Archaea</taxon>
        <taxon>Methanobacteriati</taxon>
        <taxon>Methanobacteriota</taxon>
        <taxon>Archaeoglobi</taxon>
        <taxon>Archaeoglobales</taxon>
        <taxon>Archaeoglobaceae</taxon>
        <taxon>Archaeoglobus</taxon>
    </lineage>
</organism>
<gene>
    <name type="ordered locus">AF_1331</name>
</gene>
<protein>
    <recommendedName>
        <fullName>Uncharacterized protein AF_1331</fullName>
    </recommendedName>
</protein>
<dbReference type="EMBL" id="AE000782">
    <property type="protein sequence ID" value="AAB89926.1"/>
    <property type="molecule type" value="Genomic_DNA"/>
</dbReference>
<dbReference type="PIR" id="B69416">
    <property type="entry name" value="B69416"/>
</dbReference>
<dbReference type="RefSeq" id="WP_010878828.1">
    <property type="nucleotide sequence ID" value="NC_000917.1"/>
</dbReference>
<dbReference type="SMR" id="O28938"/>
<dbReference type="STRING" id="224325.AF_1331"/>
<dbReference type="PaxDb" id="224325-AF_1331"/>
<dbReference type="EnsemblBacteria" id="AAB89926">
    <property type="protein sequence ID" value="AAB89926"/>
    <property type="gene ID" value="AF_1331"/>
</dbReference>
<dbReference type="KEGG" id="afu:AF_1331"/>
<dbReference type="eggNOG" id="arCOG00420">
    <property type="taxonomic scope" value="Archaea"/>
</dbReference>
<dbReference type="HOGENOM" id="CLU_071478_0_0_2"/>
<dbReference type="OrthoDB" id="7650at2157"/>
<dbReference type="Proteomes" id="UP000002199">
    <property type="component" value="Chromosome"/>
</dbReference>
<dbReference type="Gene3D" id="3.30.428.10">
    <property type="entry name" value="HIT-like"/>
    <property type="match status" value="2"/>
</dbReference>
<dbReference type="InterPro" id="IPR036265">
    <property type="entry name" value="HIT-like_sf"/>
</dbReference>
<dbReference type="SUPFAM" id="SSF54197">
    <property type="entry name" value="HIT-like"/>
    <property type="match status" value="1"/>
</dbReference>